<reference key="1">
    <citation type="journal article" date="2010" name="Proc. Natl. Acad. Sci. U.S.A.">
        <title>Plant flotillins are required for infection by nitrogen-fixing bacteria.</title>
        <authorList>
            <person name="Haney C.H."/>
            <person name="Long S.R."/>
        </authorList>
    </citation>
    <scope>NUCLEOTIDE SEQUENCE [MRNA]</scope>
    <scope>INDUCTION</scope>
    <scope>TISSUE SPECIFICITY</scope>
</reference>
<proteinExistence type="evidence at transcript level"/>
<comment type="function">
    <text evidence="1">May act as a scaffolding protein within caveolar membranes, functionally participating in formation of caveolae or caveolae-like vesicles (By similarity). May be involved in nodule formation.</text>
</comment>
<comment type="subcellular location">
    <subcellularLocation>
        <location evidence="4">Cell membrane</location>
        <topology evidence="4">Lipid-anchor</topology>
    </subcellularLocation>
    <subcellularLocation>
        <location evidence="1">Membrane</location>
        <location evidence="1">Caveola</location>
    </subcellularLocation>
</comment>
<comment type="tissue specificity">
    <text evidence="3">Expressed in all plant organs. Primarily expressed in vascular tissues. No change in spatial expression in root upon inoculation. Expression limited to the nodule vascular tissue.</text>
</comment>
<comment type="induction">
    <text evidence="3">Not induced during nodulation.</text>
</comment>
<comment type="PTM">
    <text evidence="4">May be palmitoylated.</text>
</comment>
<comment type="similarity">
    <text evidence="4">Belongs to the band 7/mec-2 family. Flotillin subfamily.</text>
</comment>
<dbReference type="EMBL" id="GU224278">
    <property type="protein sequence ID" value="ADA83094.1"/>
    <property type="molecule type" value="mRNA"/>
</dbReference>
<dbReference type="SMR" id="D2XNQ8"/>
<dbReference type="PaxDb" id="3880-AES73588"/>
<dbReference type="EnsemblPlants" id="rna19202">
    <property type="protein sequence ID" value="RHN70603.1"/>
    <property type="gene ID" value="gene19202"/>
</dbReference>
<dbReference type="GeneID" id="11427312"/>
<dbReference type="Gramene" id="rna19202">
    <property type="protein sequence ID" value="RHN70603.1"/>
    <property type="gene ID" value="gene19202"/>
</dbReference>
<dbReference type="KEGG" id="mtr:11427312"/>
<dbReference type="eggNOG" id="KOG2668">
    <property type="taxonomic scope" value="Eukaryota"/>
</dbReference>
<dbReference type="HOGENOM" id="CLU_030844_1_1_1"/>
<dbReference type="OrthoDB" id="6080404at2759"/>
<dbReference type="ExpressionAtlas" id="D2XNQ8">
    <property type="expression patterns" value="differential"/>
</dbReference>
<dbReference type="GO" id="GO:0005901">
    <property type="term" value="C:caveola"/>
    <property type="evidence" value="ECO:0007669"/>
    <property type="project" value="UniProtKB-SubCell"/>
</dbReference>
<dbReference type="GO" id="GO:0009877">
    <property type="term" value="P:nodulation"/>
    <property type="evidence" value="ECO:0007669"/>
    <property type="project" value="UniProtKB-KW"/>
</dbReference>
<dbReference type="CDD" id="cd03399">
    <property type="entry name" value="SPFH_flotillin"/>
    <property type="match status" value="1"/>
</dbReference>
<dbReference type="FunFam" id="3.30.479.30:FF:000015">
    <property type="entry name" value="Flotillin-like protein 2"/>
    <property type="match status" value="1"/>
</dbReference>
<dbReference type="Gene3D" id="3.30.479.30">
    <property type="entry name" value="Band 7 domain"/>
    <property type="match status" value="1"/>
</dbReference>
<dbReference type="InterPro" id="IPR001107">
    <property type="entry name" value="Band_7"/>
</dbReference>
<dbReference type="InterPro" id="IPR036013">
    <property type="entry name" value="Band_7/SPFH_dom_sf"/>
</dbReference>
<dbReference type="InterPro" id="IPR027705">
    <property type="entry name" value="Flotillin_fam"/>
</dbReference>
<dbReference type="PANTHER" id="PTHR13806:SF31">
    <property type="entry name" value="FLOTILLIN-LIKE PROTEIN 1-RELATED"/>
    <property type="match status" value="1"/>
</dbReference>
<dbReference type="PANTHER" id="PTHR13806">
    <property type="entry name" value="FLOTILLIN-RELATED"/>
    <property type="match status" value="1"/>
</dbReference>
<dbReference type="Pfam" id="PF01145">
    <property type="entry name" value="Band_7"/>
    <property type="match status" value="1"/>
</dbReference>
<dbReference type="SUPFAM" id="SSF117892">
    <property type="entry name" value="Band 7/SPFH domain"/>
    <property type="match status" value="1"/>
</dbReference>
<name>FLOT1_MEDTR</name>
<organism>
    <name type="scientific">Medicago truncatula</name>
    <name type="common">Barrel medic</name>
    <name type="synonym">Medicago tribuloides</name>
    <dbReference type="NCBI Taxonomy" id="3880"/>
    <lineage>
        <taxon>Eukaryota</taxon>
        <taxon>Viridiplantae</taxon>
        <taxon>Streptophyta</taxon>
        <taxon>Embryophyta</taxon>
        <taxon>Tracheophyta</taxon>
        <taxon>Spermatophyta</taxon>
        <taxon>Magnoliopsida</taxon>
        <taxon>eudicotyledons</taxon>
        <taxon>Gunneridae</taxon>
        <taxon>Pentapetalae</taxon>
        <taxon>rosids</taxon>
        <taxon>fabids</taxon>
        <taxon>Fabales</taxon>
        <taxon>Fabaceae</taxon>
        <taxon>Papilionoideae</taxon>
        <taxon>50 kb inversion clade</taxon>
        <taxon>NPAAA clade</taxon>
        <taxon>Hologalegina</taxon>
        <taxon>IRL clade</taxon>
        <taxon>Trifolieae</taxon>
        <taxon>Medicago</taxon>
    </lineage>
</organism>
<feature type="chain" id="PRO_0000395204" description="Flotillin-like protein 1">
    <location>
        <begin position="1"/>
        <end position="478"/>
    </location>
</feature>
<feature type="coiled-coil region" evidence="2">
    <location>
        <begin position="235"/>
        <end position="277"/>
    </location>
</feature>
<feature type="lipid moiety-binding region" description="S-palmitoyl cysteine" evidence="2">
    <location>
        <position position="35"/>
    </location>
</feature>
<evidence type="ECO:0000250" key="1"/>
<evidence type="ECO:0000255" key="2"/>
<evidence type="ECO:0000269" key="3">
    <source>
    </source>
</evidence>
<evidence type="ECO:0000305" key="4"/>
<accession>D2XNQ8</accession>
<sequence>MYRVAKASEYLVITGAGIDDVKLEKKAWIFPGQSCTVFDLSPVNYTFEVQAMSAEKLPFVLPAVFTIGPRVDDYESLLKYAKLISPHDKLSNHVNELVQGIIEGETRVLVASMTMEEVFRGTKEFKQEVFDKVQLELNQFGLWIYNANVKQLVDVPGHEYFSYLGQKTQMEAANQARVDVAEAKMKGEIGSKLREGQTIQNAAKIDAETKVIAMQRAGEGEKQGIKVRTEVKVFENQREAEVAEANSELAKKKAAWTMAAQVAELEAAKAVALREAELQGEVERMNALTTTEKLKADFLSKASVEYDTKVQEANWELYKKQKEAEAILYEKKAEAEAQKALADSTFYARKQEAEAELYAKKKEAEGIMTLGNAQGAYVSTLLNALGNNYTAVRDYLMINGGMFQEIAKINAEAVRGLEPKISIWTNGGDNNGGITEGAMGMKEVAGVYKMLPPLFKTVHEQTGMFPPAWMGSLPDKNS</sequence>
<gene>
    <name type="primary">FLOT1</name>
</gene>
<keyword id="KW-1003">Cell membrane</keyword>
<keyword id="KW-0175">Coiled coil</keyword>
<keyword id="KW-0449">Lipoprotein</keyword>
<keyword id="KW-0472">Membrane</keyword>
<keyword id="KW-0536">Nodulation</keyword>
<keyword id="KW-0564">Palmitate</keyword>
<protein>
    <recommendedName>
        <fullName>Flotillin-like protein 1</fullName>
    </recommendedName>
</protein>